<name>ISPF_ACTPJ</name>
<gene>
    <name evidence="1" type="primary">ispF</name>
    <name type="ordered locus">APJL_0808</name>
</gene>
<keyword id="KW-0414">Isoprene biosynthesis</keyword>
<keyword id="KW-0456">Lyase</keyword>
<keyword id="KW-0479">Metal-binding</keyword>
<evidence type="ECO:0000255" key="1">
    <source>
        <dbReference type="HAMAP-Rule" id="MF_00107"/>
    </source>
</evidence>
<protein>
    <recommendedName>
        <fullName evidence="1">2-C-methyl-D-erythritol 2,4-cyclodiphosphate synthase</fullName>
        <shortName evidence="1">MECDP-synthase</shortName>
        <shortName evidence="1">MECPP-synthase</shortName>
        <shortName evidence="1">MECPS</shortName>
        <ecNumber evidence="1">4.6.1.12</ecNumber>
    </recommendedName>
</protein>
<organism>
    <name type="scientific">Actinobacillus pleuropneumoniae serotype 3 (strain JL03)</name>
    <dbReference type="NCBI Taxonomy" id="434271"/>
    <lineage>
        <taxon>Bacteria</taxon>
        <taxon>Pseudomonadati</taxon>
        <taxon>Pseudomonadota</taxon>
        <taxon>Gammaproteobacteria</taxon>
        <taxon>Pasteurellales</taxon>
        <taxon>Pasteurellaceae</taxon>
        <taxon>Actinobacillus</taxon>
    </lineage>
</organism>
<accession>B0BP83</accession>
<comment type="function">
    <text evidence="1">Involved in the biosynthesis of isopentenyl diphosphate (IPP) and dimethylallyl diphosphate (DMAPP), two major building blocks of isoprenoid compounds. Catalyzes the conversion of 4-diphosphocytidyl-2-C-methyl-D-erythritol 2-phosphate (CDP-ME2P) to 2-C-methyl-D-erythritol 2,4-cyclodiphosphate (ME-CPP) with a corresponding release of cytidine 5-monophosphate (CMP).</text>
</comment>
<comment type="catalytic activity">
    <reaction evidence="1">
        <text>4-CDP-2-C-methyl-D-erythritol 2-phosphate = 2-C-methyl-D-erythritol 2,4-cyclic diphosphate + CMP</text>
        <dbReference type="Rhea" id="RHEA:23864"/>
        <dbReference type="ChEBI" id="CHEBI:57919"/>
        <dbReference type="ChEBI" id="CHEBI:58483"/>
        <dbReference type="ChEBI" id="CHEBI:60377"/>
        <dbReference type="EC" id="4.6.1.12"/>
    </reaction>
</comment>
<comment type="cofactor">
    <cofactor evidence="1">
        <name>a divalent metal cation</name>
        <dbReference type="ChEBI" id="CHEBI:60240"/>
    </cofactor>
    <text evidence="1">Binds 1 divalent metal cation per subunit.</text>
</comment>
<comment type="pathway">
    <text evidence="1">Isoprenoid biosynthesis; isopentenyl diphosphate biosynthesis via DXP pathway; isopentenyl diphosphate from 1-deoxy-D-xylulose 5-phosphate: step 4/6.</text>
</comment>
<comment type="subunit">
    <text evidence="1">Homotrimer.</text>
</comment>
<comment type="similarity">
    <text evidence="1">Belongs to the IspF family.</text>
</comment>
<dbReference type="EC" id="4.6.1.12" evidence="1"/>
<dbReference type="EMBL" id="CP000687">
    <property type="protein sequence ID" value="ABY69368.1"/>
    <property type="molecule type" value="Genomic_DNA"/>
</dbReference>
<dbReference type="RefSeq" id="WP_005604392.1">
    <property type="nucleotide sequence ID" value="NC_010278.1"/>
</dbReference>
<dbReference type="SMR" id="B0BP83"/>
<dbReference type="KEGG" id="apj:APJL_0808"/>
<dbReference type="HOGENOM" id="CLU_084630_2_0_6"/>
<dbReference type="UniPathway" id="UPA00056">
    <property type="reaction ID" value="UER00095"/>
</dbReference>
<dbReference type="Proteomes" id="UP000008547">
    <property type="component" value="Chromosome"/>
</dbReference>
<dbReference type="GO" id="GO:0008685">
    <property type="term" value="F:2-C-methyl-D-erythritol 2,4-cyclodiphosphate synthase activity"/>
    <property type="evidence" value="ECO:0007669"/>
    <property type="project" value="UniProtKB-UniRule"/>
</dbReference>
<dbReference type="GO" id="GO:0046872">
    <property type="term" value="F:metal ion binding"/>
    <property type="evidence" value="ECO:0007669"/>
    <property type="project" value="UniProtKB-KW"/>
</dbReference>
<dbReference type="GO" id="GO:0019288">
    <property type="term" value="P:isopentenyl diphosphate biosynthetic process, methylerythritol 4-phosphate pathway"/>
    <property type="evidence" value="ECO:0007669"/>
    <property type="project" value="UniProtKB-UniRule"/>
</dbReference>
<dbReference type="GO" id="GO:0016114">
    <property type="term" value="P:terpenoid biosynthetic process"/>
    <property type="evidence" value="ECO:0007669"/>
    <property type="project" value="InterPro"/>
</dbReference>
<dbReference type="CDD" id="cd00554">
    <property type="entry name" value="MECDP_synthase"/>
    <property type="match status" value="1"/>
</dbReference>
<dbReference type="FunFam" id="3.30.1330.50:FF:000001">
    <property type="entry name" value="2-C-methyl-D-erythritol 2,4-cyclodiphosphate synthase"/>
    <property type="match status" value="1"/>
</dbReference>
<dbReference type="Gene3D" id="3.30.1330.50">
    <property type="entry name" value="2-C-methyl-D-erythritol 2,4-cyclodiphosphate synthase"/>
    <property type="match status" value="1"/>
</dbReference>
<dbReference type="HAMAP" id="MF_00107">
    <property type="entry name" value="IspF"/>
    <property type="match status" value="1"/>
</dbReference>
<dbReference type="InterPro" id="IPR003526">
    <property type="entry name" value="MECDP_synthase"/>
</dbReference>
<dbReference type="InterPro" id="IPR020555">
    <property type="entry name" value="MECDP_synthase_CS"/>
</dbReference>
<dbReference type="InterPro" id="IPR036571">
    <property type="entry name" value="MECDP_synthase_sf"/>
</dbReference>
<dbReference type="NCBIfam" id="TIGR00151">
    <property type="entry name" value="ispF"/>
    <property type="match status" value="1"/>
</dbReference>
<dbReference type="PANTHER" id="PTHR43181">
    <property type="entry name" value="2-C-METHYL-D-ERYTHRITOL 2,4-CYCLODIPHOSPHATE SYNTHASE, CHLOROPLASTIC"/>
    <property type="match status" value="1"/>
</dbReference>
<dbReference type="PANTHER" id="PTHR43181:SF1">
    <property type="entry name" value="2-C-METHYL-D-ERYTHRITOL 2,4-CYCLODIPHOSPHATE SYNTHASE, CHLOROPLASTIC"/>
    <property type="match status" value="1"/>
</dbReference>
<dbReference type="Pfam" id="PF02542">
    <property type="entry name" value="YgbB"/>
    <property type="match status" value="1"/>
</dbReference>
<dbReference type="SUPFAM" id="SSF69765">
    <property type="entry name" value="IpsF-like"/>
    <property type="match status" value="1"/>
</dbReference>
<dbReference type="PROSITE" id="PS01350">
    <property type="entry name" value="ISPF"/>
    <property type="match status" value="1"/>
</dbReference>
<reference key="1">
    <citation type="journal article" date="2008" name="PLoS ONE">
        <title>Genome biology of Actinobacillus pleuropneumoniae JL03, an isolate of serotype 3 prevalent in China.</title>
        <authorList>
            <person name="Xu Z."/>
            <person name="Zhou Y."/>
            <person name="Li L."/>
            <person name="Zhou R."/>
            <person name="Xiao S."/>
            <person name="Wan Y."/>
            <person name="Zhang S."/>
            <person name="Wang K."/>
            <person name="Li W."/>
            <person name="Li L."/>
            <person name="Jin H."/>
            <person name="Kang M."/>
            <person name="Dalai B."/>
            <person name="Li T."/>
            <person name="Liu L."/>
            <person name="Cheng Y."/>
            <person name="Zhang L."/>
            <person name="Xu T."/>
            <person name="Zheng H."/>
            <person name="Pu S."/>
            <person name="Wang B."/>
            <person name="Gu W."/>
            <person name="Zhang X.L."/>
            <person name="Zhu G.-F."/>
            <person name="Wang S."/>
            <person name="Zhao G.-P."/>
            <person name="Chen H."/>
        </authorList>
    </citation>
    <scope>NUCLEOTIDE SEQUENCE [LARGE SCALE GENOMIC DNA]</scope>
    <source>
        <strain>JL03</strain>
    </source>
</reference>
<proteinExistence type="inferred from homology"/>
<feature type="chain" id="PRO_1000094237" description="2-C-methyl-D-erythritol 2,4-cyclodiphosphate synthase">
    <location>
        <begin position="1"/>
        <end position="158"/>
    </location>
</feature>
<feature type="binding site" evidence="1">
    <location>
        <begin position="9"/>
        <end position="11"/>
    </location>
    <ligand>
        <name>4-CDP-2-C-methyl-D-erythritol 2-phosphate</name>
        <dbReference type="ChEBI" id="CHEBI:57919"/>
    </ligand>
</feature>
<feature type="binding site" evidence="1">
    <location>
        <position position="9"/>
    </location>
    <ligand>
        <name>a divalent metal cation</name>
        <dbReference type="ChEBI" id="CHEBI:60240"/>
    </ligand>
</feature>
<feature type="binding site" evidence="1">
    <location>
        <position position="11"/>
    </location>
    <ligand>
        <name>a divalent metal cation</name>
        <dbReference type="ChEBI" id="CHEBI:60240"/>
    </ligand>
</feature>
<feature type="binding site" evidence="1">
    <location>
        <begin position="35"/>
        <end position="36"/>
    </location>
    <ligand>
        <name>4-CDP-2-C-methyl-D-erythritol 2-phosphate</name>
        <dbReference type="ChEBI" id="CHEBI:57919"/>
    </ligand>
</feature>
<feature type="binding site" evidence="1">
    <location>
        <position position="43"/>
    </location>
    <ligand>
        <name>a divalent metal cation</name>
        <dbReference type="ChEBI" id="CHEBI:60240"/>
    </ligand>
</feature>
<feature type="binding site" evidence="1">
    <location>
        <begin position="57"/>
        <end position="59"/>
    </location>
    <ligand>
        <name>4-CDP-2-C-methyl-D-erythritol 2-phosphate</name>
        <dbReference type="ChEBI" id="CHEBI:57919"/>
    </ligand>
</feature>
<feature type="binding site" evidence="1">
    <location>
        <begin position="62"/>
        <end position="66"/>
    </location>
    <ligand>
        <name>4-CDP-2-C-methyl-D-erythritol 2-phosphate</name>
        <dbReference type="ChEBI" id="CHEBI:57919"/>
    </ligand>
</feature>
<feature type="binding site" evidence="1">
    <location>
        <begin position="133"/>
        <end position="136"/>
    </location>
    <ligand>
        <name>4-CDP-2-C-methyl-D-erythritol 2-phosphate</name>
        <dbReference type="ChEBI" id="CHEBI:57919"/>
    </ligand>
</feature>
<feature type="binding site" evidence="1">
    <location>
        <position position="140"/>
    </location>
    <ligand>
        <name>4-CDP-2-C-methyl-D-erythritol 2-phosphate</name>
        <dbReference type="ChEBI" id="CHEBI:57919"/>
    </ligand>
</feature>
<feature type="binding site" evidence="1">
    <location>
        <position position="143"/>
    </location>
    <ligand>
        <name>4-CDP-2-C-methyl-D-erythritol 2-phosphate</name>
        <dbReference type="ChEBI" id="CHEBI:57919"/>
    </ligand>
</feature>
<feature type="site" description="Transition state stabilizer" evidence="1">
    <location>
        <position position="35"/>
    </location>
</feature>
<feature type="site" description="Transition state stabilizer" evidence="1">
    <location>
        <position position="134"/>
    </location>
</feature>
<sequence>MIRIGHGFDVHAFGQDRPLMICGVEVPYHTGFIAHSDGDVALHALTDALLGAVALGDIGKLFPDTDMQYKNADSRKLLIEAYRQVRAQGYKVANVDVTIIAQAPKMRPYIDQMRQTIADDLQCDAMQVNVKATTTEKLGFTGRGEGIACEAVALLIKQ</sequence>